<protein>
    <recommendedName>
        <fullName>Tiggy-winkle hedgehog protein</fullName>
    </recommendedName>
</protein>
<organism>
    <name type="scientific">Devario pathirana</name>
    <name type="common">Barred danio</name>
    <name type="synonym">Danio pathirana</name>
    <dbReference type="NCBI Taxonomy" id="46779"/>
    <lineage>
        <taxon>Eukaryota</taxon>
        <taxon>Metazoa</taxon>
        <taxon>Chordata</taxon>
        <taxon>Craniata</taxon>
        <taxon>Vertebrata</taxon>
        <taxon>Euteleostomi</taxon>
        <taxon>Actinopterygii</taxon>
        <taxon>Neopterygii</taxon>
        <taxon>Teleostei</taxon>
        <taxon>Ostariophysi</taxon>
        <taxon>Cypriniformes</taxon>
        <taxon>Danionidae</taxon>
        <taxon>Danioninae</taxon>
        <taxon>Devario</taxon>
    </lineage>
</organism>
<keyword id="KW-0068">Autocatalytic cleavage</keyword>
<keyword id="KW-0106">Calcium</keyword>
<keyword id="KW-1003">Cell membrane</keyword>
<keyword id="KW-0217">Developmental protein</keyword>
<keyword id="KW-0378">Hydrolase</keyword>
<keyword id="KW-0472">Membrane</keyword>
<keyword id="KW-0479">Metal-binding</keyword>
<keyword id="KW-0645">Protease</keyword>
<keyword id="KW-0964">Secreted</keyword>
<keyword id="KW-0862">Zinc</keyword>
<proteinExistence type="inferred from homology"/>
<reference key="1">
    <citation type="journal article" date="1996" name="Proc. Natl. Acad. Sci. U.S.A.">
        <title>Evolutionary analyses of hedgehog and Hoxd-10 genes in fish species closely related to the zebrafish.</title>
        <authorList>
            <person name="Zardoya R."/>
            <person name="Abouheif E."/>
            <person name="Meyer A."/>
        </authorList>
    </citation>
    <scope>NUCLEOTIDE SEQUENCE [GENOMIC DNA]</scope>
    <source>
        <tissue>Muscle</tissue>
    </source>
</reference>
<sequence length="53" mass="6063">NSLAISVMNQWPGVKLRVTEGWDEDGHHFEESLHYEGRAVDITTSDRDKSKYG</sequence>
<gene>
    <name type="primary">twhh</name>
</gene>
<dbReference type="EMBL" id="U68240">
    <property type="protein sequence ID" value="AAB38680.1"/>
    <property type="molecule type" value="Genomic_DNA"/>
</dbReference>
<dbReference type="SMR" id="O13253"/>
<dbReference type="GO" id="GO:0005615">
    <property type="term" value="C:extracellular space"/>
    <property type="evidence" value="ECO:0007669"/>
    <property type="project" value="TreeGrafter"/>
</dbReference>
<dbReference type="GO" id="GO:0005886">
    <property type="term" value="C:plasma membrane"/>
    <property type="evidence" value="ECO:0007669"/>
    <property type="project" value="UniProtKB-SubCell"/>
</dbReference>
<dbReference type="GO" id="GO:0005509">
    <property type="term" value="F:calcium ion binding"/>
    <property type="evidence" value="ECO:0007669"/>
    <property type="project" value="TreeGrafter"/>
</dbReference>
<dbReference type="GO" id="GO:0005113">
    <property type="term" value="F:patched binding"/>
    <property type="evidence" value="ECO:0007669"/>
    <property type="project" value="TreeGrafter"/>
</dbReference>
<dbReference type="GO" id="GO:0008233">
    <property type="term" value="F:peptidase activity"/>
    <property type="evidence" value="ECO:0007669"/>
    <property type="project" value="UniProtKB-KW"/>
</dbReference>
<dbReference type="GO" id="GO:0048513">
    <property type="term" value="P:animal organ development"/>
    <property type="evidence" value="ECO:0007669"/>
    <property type="project" value="UniProtKB-ARBA"/>
</dbReference>
<dbReference type="GO" id="GO:0048468">
    <property type="term" value="P:cell development"/>
    <property type="evidence" value="ECO:0007669"/>
    <property type="project" value="UniProtKB-ARBA"/>
</dbReference>
<dbReference type="GO" id="GO:0001708">
    <property type="term" value="P:cell fate specification"/>
    <property type="evidence" value="ECO:0007669"/>
    <property type="project" value="TreeGrafter"/>
</dbReference>
<dbReference type="GO" id="GO:0007267">
    <property type="term" value="P:cell-cell signaling"/>
    <property type="evidence" value="ECO:0007669"/>
    <property type="project" value="InterPro"/>
</dbReference>
<dbReference type="GO" id="GO:0007417">
    <property type="term" value="P:central nervous system development"/>
    <property type="evidence" value="ECO:0007669"/>
    <property type="project" value="UniProtKB-ARBA"/>
</dbReference>
<dbReference type="GO" id="GO:0030182">
    <property type="term" value="P:neuron differentiation"/>
    <property type="evidence" value="ECO:0007669"/>
    <property type="project" value="UniProtKB-ARBA"/>
</dbReference>
<dbReference type="GO" id="GO:0006508">
    <property type="term" value="P:proteolysis"/>
    <property type="evidence" value="ECO:0007669"/>
    <property type="project" value="UniProtKB-KW"/>
</dbReference>
<dbReference type="GO" id="GO:0010468">
    <property type="term" value="P:regulation of gene expression"/>
    <property type="evidence" value="ECO:0007669"/>
    <property type="project" value="TreeGrafter"/>
</dbReference>
<dbReference type="GO" id="GO:0007224">
    <property type="term" value="P:smoothened signaling pathway"/>
    <property type="evidence" value="ECO:0007669"/>
    <property type="project" value="TreeGrafter"/>
</dbReference>
<dbReference type="GO" id="GO:0009888">
    <property type="term" value="P:tissue development"/>
    <property type="evidence" value="ECO:0007669"/>
    <property type="project" value="UniProtKB-ARBA"/>
</dbReference>
<dbReference type="Gene3D" id="3.30.1380.10">
    <property type="match status" value="1"/>
</dbReference>
<dbReference type="InterPro" id="IPR001657">
    <property type="entry name" value="Hedgehog"/>
</dbReference>
<dbReference type="InterPro" id="IPR009045">
    <property type="entry name" value="Hedgehog_sig/DD-Pept_Zn-bd_sf"/>
</dbReference>
<dbReference type="InterPro" id="IPR050387">
    <property type="entry name" value="Hedgehog_Signaling"/>
</dbReference>
<dbReference type="InterPro" id="IPR000320">
    <property type="entry name" value="Hedgehog_signalling_dom"/>
</dbReference>
<dbReference type="PANTHER" id="PTHR11889">
    <property type="entry name" value="HEDGEHOG"/>
    <property type="match status" value="1"/>
</dbReference>
<dbReference type="PANTHER" id="PTHR11889:SF36">
    <property type="entry name" value="SONIC HEDGEHOG PROTEIN"/>
    <property type="match status" value="1"/>
</dbReference>
<dbReference type="Pfam" id="PF01085">
    <property type="entry name" value="HH_signal"/>
    <property type="match status" value="1"/>
</dbReference>
<dbReference type="PRINTS" id="PR00632">
    <property type="entry name" value="SONICHHOG"/>
</dbReference>
<dbReference type="SUPFAM" id="SSF55166">
    <property type="entry name" value="Hedgehog/DD-peptidase"/>
    <property type="match status" value="1"/>
</dbReference>
<comment type="function">
    <text evidence="1">Intercellular signal essential for a variety of patterning events during development. Involved in dorso-ventral patterning of the brain and in early patterning of the developing eyes (By similarity).</text>
</comment>
<comment type="subcellular location">
    <subcellularLocation>
        <location evidence="1">Cell membrane</location>
    </subcellularLocation>
    <subcellularLocation>
        <location evidence="1">Secreted</location>
        <location evidence="1">Extracellular space</location>
    </subcellularLocation>
    <text evidence="1">Tiggy-winkle hedgehog protein N-product: Cell membrane; Lipid-anchor; Extracellular side. The N-terminal peptide remains associated with the cell surface. Tiggy-winkle hedgehog protein C-product: Secreted, extracellular space. The C-terminal peptide diffuses from the cell.</text>
</comment>
<comment type="PTM">
    <text evidence="1">The C-terminal domain displays an autoproteolysis activity and a cholesterol transferase activity. Both activities result in the cleavage of the full-length protein and covalent attachment of a cholesterol moiety to the C-terminal of the newly generated N-terminal fragment (N-product). This covalent modification appears to play an essential role in restricting the spatial distribution of the protein activity to the cell surface. The N-product is the active species in both local and long-range signaling, whereas the C-product has no signaling activity (By similarity).</text>
</comment>
<comment type="similarity">
    <text evidence="3">Belongs to the hedgehog family.</text>
</comment>
<evidence type="ECO:0000250" key="1"/>
<evidence type="ECO:0000250" key="2">
    <source>
        <dbReference type="UniProtKB" id="Q15465"/>
    </source>
</evidence>
<evidence type="ECO:0000305" key="3"/>
<feature type="chain" id="PRO_0000058756" description="Tiggy-winkle hedgehog protein">
    <location>
        <begin position="1" status="less than"/>
        <end position="53" status="greater than"/>
    </location>
</feature>
<feature type="binding site" evidence="2">
    <location>
        <position position="19"/>
    </location>
    <ligand>
        <name>Ca(2+)</name>
        <dbReference type="ChEBI" id="CHEBI:29108"/>
        <label>1</label>
    </ligand>
</feature>
<feature type="binding site" evidence="2">
    <location>
        <position position="20"/>
    </location>
    <ligand>
        <name>Ca(2+)</name>
        <dbReference type="ChEBI" id="CHEBI:29108"/>
        <label>1</label>
    </ligand>
</feature>
<feature type="binding site" evidence="2">
    <location>
        <position position="20"/>
    </location>
    <ligand>
        <name>Ca(2+)</name>
        <dbReference type="ChEBI" id="CHEBI:29108"/>
        <label>2</label>
    </ligand>
</feature>
<feature type="binding site" evidence="2">
    <location>
        <position position="23"/>
    </location>
    <ligand>
        <name>Ca(2+)</name>
        <dbReference type="ChEBI" id="CHEBI:29108"/>
        <label>2</label>
    </ligand>
</feature>
<feature type="binding site" evidence="2">
    <location>
        <position position="25"/>
    </location>
    <ligand>
        <name>Ca(2+)</name>
        <dbReference type="ChEBI" id="CHEBI:29108"/>
        <label>2</label>
    </ligand>
</feature>
<feature type="binding site" evidence="2">
    <location>
        <position position="34"/>
    </location>
    <ligand>
        <name>Zn(2+)</name>
        <dbReference type="ChEBI" id="CHEBI:29105"/>
    </ligand>
</feature>
<feature type="binding site" evidence="2">
    <location>
        <position position="41"/>
    </location>
    <ligand>
        <name>Zn(2+)</name>
        <dbReference type="ChEBI" id="CHEBI:29105"/>
    </ligand>
</feature>
<feature type="non-terminal residue">
    <location>
        <position position="1"/>
    </location>
</feature>
<feature type="non-terminal residue">
    <location>
        <position position="53"/>
    </location>
</feature>
<accession>O13253</accession>
<accession>O13223</accession>
<name>TWHH_DEVPA</name>